<proteinExistence type="inferred from homology"/>
<accession>Q0SXM7</accession>
<dbReference type="EC" id="4.2.1.8" evidence="1"/>
<dbReference type="EMBL" id="CP000266">
    <property type="protein sequence ID" value="ABF06188.1"/>
    <property type="molecule type" value="Genomic_DNA"/>
</dbReference>
<dbReference type="RefSeq" id="WP_000438582.1">
    <property type="nucleotide sequence ID" value="NC_008258.1"/>
</dbReference>
<dbReference type="SMR" id="Q0SXM7"/>
<dbReference type="GeneID" id="93777517"/>
<dbReference type="KEGG" id="sfv:SFV_4204"/>
<dbReference type="HOGENOM" id="CLU_058621_2_0_6"/>
<dbReference type="UniPathway" id="UPA00246"/>
<dbReference type="Proteomes" id="UP000000659">
    <property type="component" value="Chromosome"/>
</dbReference>
<dbReference type="GO" id="GO:0008198">
    <property type="term" value="F:ferrous iron binding"/>
    <property type="evidence" value="ECO:0007669"/>
    <property type="project" value="TreeGrafter"/>
</dbReference>
<dbReference type="GO" id="GO:0030145">
    <property type="term" value="F:manganese ion binding"/>
    <property type="evidence" value="ECO:0007669"/>
    <property type="project" value="TreeGrafter"/>
</dbReference>
<dbReference type="GO" id="GO:0008927">
    <property type="term" value="F:mannonate dehydratase activity"/>
    <property type="evidence" value="ECO:0007669"/>
    <property type="project" value="UniProtKB-UniRule"/>
</dbReference>
<dbReference type="GO" id="GO:0042840">
    <property type="term" value="P:D-glucuronate catabolic process"/>
    <property type="evidence" value="ECO:0007669"/>
    <property type="project" value="TreeGrafter"/>
</dbReference>
<dbReference type="FunFam" id="3.20.20.150:FF:000004">
    <property type="entry name" value="Mannonate dehydratase"/>
    <property type="match status" value="1"/>
</dbReference>
<dbReference type="FunFam" id="3.20.20.150:FF:000005">
    <property type="entry name" value="Mannonate dehydratase"/>
    <property type="match status" value="1"/>
</dbReference>
<dbReference type="Gene3D" id="3.20.20.150">
    <property type="entry name" value="Divalent-metal-dependent TIM barrel enzymes"/>
    <property type="match status" value="2"/>
</dbReference>
<dbReference type="HAMAP" id="MF_00106">
    <property type="entry name" value="UxuA"/>
    <property type="match status" value="1"/>
</dbReference>
<dbReference type="InterPro" id="IPR004628">
    <property type="entry name" value="Man_deHydtase"/>
</dbReference>
<dbReference type="InterPro" id="IPR036237">
    <property type="entry name" value="Xyl_isomerase-like_sf"/>
</dbReference>
<dbReference type="NCBIfam" id="NF003027">
    <property type="entry name" value="PRK03906.1"/>
    <property type="match status" value="1"/>
</dbReference>
<dbReference type="NCBIfam" id="TIGR00695">
    <property type="entry name" value="uxuA"/>
    <property type="match status" value="1"/>
</dbReference>
<dbReference type="PANTHER" id="PTHR30387">
    <property type="entry name" value="MANNONATE DEHYDRATASE"/>
    <property type="match status" value="1"/>
</dbReference>
<dbReference type="PANTHER" id="PTHR30387:SF2">
    <property type="entry name" value="MANNONATE DEHYDRATASE"/>
    <property type="match status" value="1"/>
</dbReference>
<dbReference type="Pfam" id="PF03786">
    <property type="entry name" value="UxuA"/>
    <property type="match status" value="1"/>
</dbReference>
<dbReference type="PIRSF" id="PIRSF016049">
    <property type="entry name" value="Man_dehyd"/>
    <property type="match status" value="1"/>
</dbReference>
<dbReference type="SUPFAM" id="SSF51658">
    <property type="entry name" value="Xylose isomerase-like"/>
    <property type="match status" value="1"/>
</dbReference>
<name>UXUA_SHIF8</name>
<evidence type="ECO:0000255" key="1">
    <source>
        <dbReference type="HAMAP-Rule" id="MF_00106"/>
    </source>
</evidence>
<comment type="function">
    <text evidence="1">Catalyzes the dehydration of D-mannonate.</text>
</comment>
<comment type="catalytic activity">
    <reaction evidence="1">
        <text>D-mannonate = 2-dehydro-3-deoxy-D-gluconate + H2O</text>
        <dbReference type="Rhea" id="RHEA:20097"/>
        <dbReference type="ChEBI" id="CHEBI:15377"/>
        <dbReference type="ChEBI" id="CHEBI:17767"/>
        <dbReference type="ChEBI" id="CHEBI:57990"/>
        <dbReference type="EC" id="4.2.1.8"/>
    </reaction>
</comment>
<comment type="cofactor">
    <cofactor evidence="1">
        <name>Fe(2+)</name>
        <dbReference type="ChEBI" id="CHEBI:29033"/>
    </cofactor>
    <cofactor evidence="1">
        <name>Mn(2+)</name>
        <dbReference type="ChEBI" id="CHEBI:29035"/>
    </cofactor>
</comment>
<comment type="pathway">
    <text evidence="1">Carbohydrate metabolism; pentose and glucuronate interconversion.</text>
</comment>
<comment type="similarity">
    <text evidence="1">Belongs to the mannonate dehydratase family.</text>
</comment>
<protein>
    <recommendedName>
        <fullName evidence="1">Mannonate dehydratase</fullName>
        <ecNumber evidence="1">4.2.1.8</ecNumber>
    </recommendedName>
    <alternativeName>
        <fullName evidence="1">D-mannonate hydro-lyase</fullName>
    </alternativeName>
</protein>
<feature type="chain" id="PRO_1000034337" description="Mannonate dehydratase">
    <location>
        <begin position="1"/>
        <end position="394"/>
    </location>
</feature>
<sequence>MEQTWRWYGPNDPVSLADVRQAGATGVVTALHHIPNGEVWSVEEILKRKAIVEDAGLVWSVVESVPIHEDIKTHTGNYEQWIANYQQTLRNLAQCGIRTVCYNFMPVLDWTRTDLEYVLPDGSKALRFDQIEFAAFEMHILKRPGAEADYTEEEIAQAAERFATMSDEDKARLTRNIIAGLPGAEEGYTLDQFRKHLELYKDIDKAKLRENFAVFLKAIIPVAEEVGVRMAVHPDDPPRPILGLPRIVSTIEDMQWMVDTVNSMANGFTMCTGSYGVRADNDLVDMIKQFGPRIYFTHLRSTMREDNPKTFHEAAHLNGDVDMYEVVKAIVEEEHRRKAEGKEDLIPMRPDHGHQMLDDLKKKTNPGYSAIGRLKGLAEVRGVELAIQRAFFSR</sequence>
<reference key="1">
    <citation type="journal article" date="2006" name="BMC Genomics">
        <title>Complete genome sequence of Shigella flexneri 5b and comparison with Shigella flexneri 2a.</title>
        <authorList>
            <person name="Nie H."/>
            <person name="Yang F."/>
            <person name="Zhang X."/>
            <person name="Yang J."/>
            <person name="Chen L."/>
            <person name="Wang J."/>
            <person name="Xiong Z."/>
            <person name="Peng J."/>
            <person name="Sun L."/>
            <person name="Dong J."/>
            <person name="Xue Y."/>
            <person name="Xu X."/>
            <person name="Chen S."/>
            <person name="Yao Z."/>
            <person name="Shen Y."/>
            <person name="Jin Q."/>
        </authorList>
    </citation>
    <scope>NUCLEOTIDE SEQUENCE [LARGE SCALE GENOMIC DNA]</scope>
    <source>
        <strain>8401</strain>
    </source>
</reference>
<organism>
    <name type="scientific">Shigella flexneri serotype 5b (strain 8401)</name>
    <dbReference type="NCBI Taxonomy" id="373384"/>
    <lineage>
        <taxon>Bacteria</taxon>
        <taxon>Pseudomonadati</taxon>
        <taxon>Pseudomonadota</taxon>
        <taxon>Gammaproteobacteria</taxon>
        <taxon>Enterobacterales</taxon>
        <taxon>Enterobacteriaceae</taxon>
        <taxon>Shigella</taxon>
    </lineage>
</organism>
<keyword id="KW-0408">Iron</keyword>
<keyword id="KW-0456">Lyase</keyword>
<keyword id="KW-0464">Manganese</keyword>
<gene>
    <name evidence="1" type="primary">uxuA</name>
    <name type="ordered locus">SFV_4204</name>
</gene>